<name>PHEB_PROMP</name>
<gene>
    <name type="primary">cpeB</name>
    <name type="ordered locus">PMM0305</name>
</gene>
<feature type="chain" id="PRO_0000403183" description="R-phycoerythrin subunit beta">
    <location>
        <begin position="1"/>
        <end position="175"/>
    </location>
</feature>
<feature type="binding site" description="covalent" evidence="3">
    <location>
        <position position="82"/>
    </location>
    <ligand>
        <name>(2R,3E)-phycoerythrobilin</name>
        <dbReference type="ChEBI" id="CHEBI:85276"/>
        <label>1</label>
    </ligand>
</feature>
<feature type="mutagenesis site" description="No effect on chromophorylation." evidence="1">
    <original>C</original>
    <variation>R</variation>
    <location>
        <position position="61"/>
    </location>
</feature>
<feature type="mutagenesis site" description="Loss of chromophorylation." evidence="1">
    <original>C</original>
    <variation>S</variation>
    <location>
        <position position="82"/>
    </location>
</feature>
<organism>
    <name type="scientific">Prochlorococcus marinus subsp. pastoris (strain CCMP1986 / NIES-2087 / MED4)</name>
    <dbReference type="NCBI Taxonomy" id="59919"/>
    <lineage>
        <taxon>Bacteria</taxon>
        <taxon>Bacillati</taxon>
        <taxon>Cyanobacteriota</taxon>
        <taxon>Cyanophyceae</taxon>
        <taxon>Synechococcales</taxon>
        <taxon>Prochlorococcaceae</taxon>
        <taxon>Prochlorococcus</taxon>
    </lineage>
</organism>
<accession>Q7V2Z3</accession>
<comment type="function">
    <text>Green-light absorbing phycoerythrin of unknown function.</text>
</comment>
<comment type="subunit">
    <text evidence="2">Homodimer.</text>
</comment>
<comment type="induction">
    <text evidence="1">Constitutively expressed at very low levels.</text>
</comment>
<comment type="PTM">
    <text>Contains one covalently linked phycoerythrobilin chromophore.</text>
</comment>
<comment type="miscellaneous">
    <text>Prochlorococcus does not possess phycobilisomes, instead it uses a divinyl-chlorophyll antenna complex for light harvesting.</text>
</comment>
<comment type="similarity">
    <text evidence="3">Belongs to the phycobiliprotein family.</text>
</comment>
<sequence>MTVSKSNQILSNDRDLENISNKNIEDIKEFINTANSRLDAIDSITNNSHAIAADAVTAMICENQDSVNTKISLDTTNKMSVCLRDGEIILRIVSYLLISDDESVLSKNCLKDLKNTYLALGVPLKNAIRVFELMRDATISDLKSTVNSMKGEKEFLSDLISNTEFQFERIINLLR</sequence>
<protein>
    <recommendedName>
        <fullName>R-phycoerythrin subunit beta</fullName>
    </recommendedName>
</protein>
<proteinExistence type="evidence at protein level"/>
<reference key="1">
    <citation type="journal article" date="2003" name="Nature">
        <title>Genome divergence in two Prochlorococcus ecotypes reflects oceanic niche differentiation.</title>
        <authorList>
            <person name="Rocap G."/>
            <person name="Larimer F.W."/>
            <person name="Lamerdin J.E."/>
            <person name="Malfatti S."/>
            <person name="Chain P."/>
            <person name="Ahlgren N.A."/>
            <person name="Arellano A."/>
            <person name="Coleman M."/>
            <person name="Hauser L."/>
            <person name="Hess W.R."/>
            <person name="Johnson Z.I."/>
            <person name="Land M.L."/>
            <person name="Lindell D."/>
            <person name="Post A.F."/>
            <person name="Regala W."/>
            <person name="Shah M."/>
            <person name="Shaw S.L."/>
            <person name="Steglich C."/>
            <person name="Sullivan M.B."/>
            <person name="Ting C.S."/>
            <person name="Tolonen A."/>
            <person name="Webb E.A."/>
            <person name="Zinser E.R."/>
            <person name="Chisholm S.W."/>
        </authorList>
    </citation>
    <scope>NUCLEOTIDE SEQUENCE [LARGE SCALE GENOMIC DNA]</scope>
    <source>
        <strain>CCMP1986 / NIES-2087 / MED4</strain>
    </source>
</reference>
<reference key="2">
    <citation type="journal article" date="2005" name="Environ. Microbiol.">
        <title>A green light-absorbing phycoerythrin is present in the high-light-adapted marine cyanobacterium Prochlorococcus sp. MED4.</title>
        <authorList>
            <person name="Steglich C."/>
            <person name="Frankenberg-Dinkel N."/>
            <person name="Penno S."/>
            <person name="Hess W.R."/>
        </authorList>
    </citation>
    <scope>CHROMOPHORE-BINDING</scope>
    <scope>INDUCTION</scope>
    <scope>MUTAGENESIS OF CYS-61 AND CYS-82</scope>
    <source>
        <strain>CCMP1986 / NIES-2087 / MED4</strain>
    </source>
</reference>
<reference key="3">
    <citation type="journal article" date="2010" name="J. Biol. Chem.">
        <title>CpeS is a lyase specific for attachment of 3Z-PEB to Cys82 of {beta}-phycoerythrin from Prochlorococcus marinus MED4.</title>
        <authorList>
            <person name="Wiethaus J."/>
            <person name="Busch A.W."/>
            <person name="Kock K."/>
            <person name="Leichert L.I."/>
            <person name="Herrmann C."/>
            <person name="Frankenberg-Dinkel N."/>
        </authorList>
    </citation>
    <scope>CHROMOPHORE-BINDING</scope>
    <scope>SUBUNIT</scope>
    <source>
        <strain>CCMP1986 / NIES-2087 / MED4</strain>
    </source>
</reference>
<dbReference type="EMBL" id="BX548174">
    <property type="protein sequence ID" value="CAE18764.1"/>
    <property type="molecule type" value="Genomic_DNA"/>
</dbReference>
<dbReference type="RefSeq" id="WP_011131942.1">
    <property type="nucleotide sequence ID" value="NC_005072.1"/>
</dbReference>
<dbReference type="SMR" id="Q7V2Z3"/>
<dbReference type="STRING" id="59919.PMM0305"/>
<dbReference type="KEGG" id="pmm:PMM0305"/>
<dbReference type="eggNOG" id="ENOG502ZAPU">
    <property type="taxonomic scope" value="Bacteria"/>
</dbReference>
<dbReference type="HOGENOM" id="CLU_104219_0_0_3"/>
<dbReference type="OrthoDB" id="512145at2"/>
<dbReference type="Proteomes" id="UP000001026">
    <property type="component" value="Chromosome"/>
</dbReference>
<dbReference type="GO" id="GO:0030089">
    <property type="term" value="C:phycobilisome"/>
    <property type="evidence" value="ECO:0007669"/>
    <property type="project" value="InterPro"/>
</dbReference>
<dbReference type="GO" id="GO:0015979">
    <property type="term" value="P:photosynthesis"/>
    <property type="evidence" value="ECO:0007669"/>
    <property type="project" value="InterPro"/>
</dbReference>
<dbReference type="Gene3D" id="1.10.490.20">
    <property type="entry name" value="Phycocyanins"/>
    <property type="match status" value="1"/>
</dbReference>
<dbReference type="InterPro" id="IPR009050">
    <property type="entry name" value="Globin-like_sf"/>
</dbReference>
<dbReference type="InterPro" id="IPR012128">
    <property type="entry name" value="Phycobilisome_asu/bsu"/>
</dbReference>
<dbReference type="InterPro" id="IPR038719">
    <property type="entry name" value="Phycobilisome_asu/bsu_sf"/>
</dbReference>
<dbReference type="PANTHER" id="PTHR34011:SF7">
    <property type="entry name" value="C-PHYCOCYANIN BETA SUBUNIT"/>
    <property type="match status" value="1"/>
</dbReference>
<dbReference type="PANTHER" id="PTHR34011">
    <property type="entry name" value="PHYCOBILISOME 32.1 KDA LINKER POLYPEPTIDE, PHYCOCYANIN-ASSOCIATED, ROD 2-RELATED"/>
    <property type="match status" value="1"/>
</dbReference>
<dbReference type="Pfam" id="PF00502">
    <property type="entry name" value="Phycobilisome"/>
    <property type="match status" value="1"/>
</dbReference>
<dbReference type="PIRSF" id="PIRSF000081">
    <property type="entry name" value="Phycocyanin"/>
    <property type="match status" value="1"/>
</dbReference>
<dbReference type="SUPFAM" id="SSF46458">
    <property type="entry name" value="Globin-like"/>
    <property type="match status" value="1"/>
</dbReference>
<evidence type="ECO:0000269" key="1">
    <source>
    </source>
</evidence>
<evidence type="ECO:0000269" key="2">
    <source>
    </source>
</evidence>
<evidence type="ECO:0000305" key="3"/>
<keyword id="KW-0089">Bile pigment</keyword>
<keyword id="KW-0157">Chromophore</keyword>